<proteinExistence type="inferred from homology"/>
<sequence length="190" mass="21143">MNKDAYIQMFKDTNALLEGHFLLSSGKHSAKYLQCAKVLQYPNLAEMICSDLAQHFKDQQIDVVIGPALGAVTLSYELARQLNCRSIFAEREDGIMKLRRGFKIEEGEKVLVVEDVITTGGSVREIIEIVKEYRGEVVAVAGIVDRSGGKVDLGYPLKTLLTLEIETFEPEECPLCREGIPIVKPGSRKK</sequence>
<organism>
    <name type="scientific">Caldicellulosiruptor bescii (strain ATCC BAA-1888 / DSM 6725 / KCTC 15123 / Z-1320)</name>
    <name type="common">Anaerocellum thermophilum</name>
    <dbReference type="NCBI Taxonomy" id="521460"/>
    <lineage>
        <taxon>Bacteria</taxon>
        <taxon>Bacillati</taxon>
        <taxon>Bacillota</taxon>
        <taxon>Bacillota incertae sedis</taxon>
        <taxon>Caldicellulosiruptorales</taxon>
        <taxon>Caldicellulosiruptoraceae</taxon>
        <taxon>Caldicellulosiruptor</taxon>
    </lineage>
</organism>
<comment type="function">
    <text evidence="1">Catalyzes the transfer of a ribosyl phosphate group from 5-phosphoribose 1-diphosphate to orotate, leading to the formation of orotidine monophosphate (OMP).</text>
</comment>
<comment type="catalytic activity">
    <reaction evidence="1">
        <text>orotidine 5'-phosphate + diphosphate = orotate + 5-phospho-alpha-D-ribose 1-diphosphate</text>
        <dbReference type="Rhea" id="RHEA:10380"/>
        <dbReference type="ChEBI" id="CHEBI:30839"/>
        <dbReference type="ChEBI" id="CHEBI:33019"/>
        <dbReference type="ChEBI" id="CHEBI:57538"/>
        <dbReference type="ChEBI" id="CHEBI:58017"/>
        <dbReference type="EC" id="2.4.2.10"/>
    </reaction>
</comment>
<comment type="cofactor">
    <cofactor evidence="1">
        <name>Mg(2+)</name>
        <dbReference type="ChEBI" id="CHEBI:18420"/>
    </cofactor>
</comment>
<comment type="pathway">
    <text evidence="1">Pyrimidine metabolism; UMP biosynthesis via de novo pathway; UMP from orotate: step 1/2.</text>
</comment>
<comment type="subunit">
    <text evidence="1">Homodimer.</text>
</comment>
<comment type="similarity">
    <text evidence="1">Belongs to the purine/pyrimidine phosphoribosyltransferase family. PyrE subfamily.</text>
</comment>
<reference key="1">
    <citation type="submission" date="2009-01" db="EMBL/GenBank/DDBJ databases">
        <title>Complete sequence of chromosome of Caldicellulosiruptor becscii DSM 6725.</title>
        <authorList>
            <person name="Lucas S."/>
            <person name="Copeland A."/>
            <person name="Lapidus A."/>
            <person name="Glavina del Rio T."/>
            <person name="Tice H."/>
            <person name="Bruce D."/>
            <person name="Goodwin L."/>
            <person name="Pitluck S."/>
            <person name="Sims D."/>
            <person name="Meincke L."/>
            <person name="Brettin T."/>
            <person name="Detter J.C."/>
            <person name="Han C."/>
            <person name="Larimer F."/>
            <person name="Land M."/>
            <person name="Hauser L."/>
            <person name="Kyrpides N."/>
            <person name="Ovchinnikova G."/>
            <person name="Kataeva I."/>
            <person name="Adams M.W.W."/>
        </authorList>
    </citation>
    <scope>NUCLEOTIDE SEQUENCE [LARGE SCALE GENOMIC DNA]</scope>
    <source>
        <strain>ATCC BAA-1888 / DSM 6725 / KCTC 15123 / Z-1320</strain>
    </source>
</reference>
<keyword id="KW-0328">Glycosyltransferase</keyword>
<keyword id="KW-0460">Magnesium</keyword>
<keyword id="KW-0665">Pyrimidine biosynthesis</keyword>
<keyword id="KW-0808">Transferase</keyword>
<evidence type="ECO:0000255" key="1">
    <source>
        <dbReference type="HAMAP-Rule" id="MF_01208"/>
    </source>
</evidence>
<accession>B9MS28</accession>
<feature type="chain" id="PRO_1000164668" description="Orotate phosphoribosyltransferase">
    <location>
        <begin position="1"/>
        <end position="190"/>
    </location>
</feature>
<feature type="binding site" evidence="1">
    <location>
        <begin position="114"/>
        <end position="122"/>
    </location>
    <ligand>
        <name>5-phospho-alpha-D-ribose 1-diphosphate</name>
        <dbReference type="ChEBI" id="CHEBI:58017"/>
    </ligand>
</feature>
<feature type="binding site" evidence="1">
    <location>
        <position position="118"/>
    </location>
    <ligand>
        <name>orotate</name>
        <dbReference type="ChEBI" id="CHEBI:30839"/>
    </ligand>
</feature>
<feature type="binding site" evidence="1">
    <location>
        <position position="146"/>
    </location>
    <ligand>
        <name>orotate</name>
        <dbReference type="ChEBI" id="CHEBI:30839"/>
    </ligand>
</feature>
<dbReference type="EC" id="2.4.2.10" evidence="1"/>
<dbReference type="EMBL" id="CP001393">
    <property type="protein sequence ID" value="ACM60482.1"/>
    <property type="molecule type" value="Genomic_DNA"/>
</dbReference>
<dbReference type="RefSeq" id="WP_015907851.1">
    <property type="nucleotide sequence ID" value="NC_012034.1"/>
</dbReference>
<dbReference type="SMR" id="B9MS28"/>
<dbReference type="STRING" id="521460.Athe_1382"/>
<dbReference type="GeneID" id="31772729"/>
<dbReference type="KEGG" id="ate:Athe_1382"/>
<dbReference type="eggNOG" id="COG0461">
    <property type="taxonomic scope" value="Bacteria"/>
</dbReference>
<dbReference type="HOGENOM" id="CLU_074878_3_0_9"/>
<dbReference type="UniPathway" id="UPA00070">
    <property type="reaction ID" value="UER00119"/>
</dbReference>
<dbReference type="Proteomes" id="UP000007723">
    <property type="component" value="Chromosome"/>
</dbReference>
<dbReference type="GO" id="GO:0000287">
    <property type="term" value="F:magnesium ion binding"/>
    <property type="evidence" value="ECO:0007669"/>
    <property type="project" value="UniProtKB-UniRule"/>
</dbReference>
<dbReference type="GO" id="GO:0004588">
    <property type="term" value="F:orotate phosphoribosyltransferase activity"/>
    <property type="evidence" value="ECO:0007669"/>
    <property type="project" value="UniProtKB-UniRule"/>
</dbReference>
<dbReference type="GO" id="GO:0044205">
    <property type="term" value="P:'de novo' UMP biosynthetic process"/>
    <property type="evidence" value="ECO:0007669"/>
    <property type="project" value="UniProtKB-UniRule"/>
</dbReference>
<dbReference type="GO" id="GO:0019856">
    <property type="term" value="P:pyrimidine nucleobase biosynthetic process"/>
    <property type="evidence" value="ECO:0007669"/>
    <property type="project" value="InterPro"/>
</dbReference>
<dbReference type="CDD" id="cd06223">
    <property type="entry name" value="PRTases_typeI"/>
    <property type="match status" value="1"/>
</dbReference>
<dbReference type="Gene3D" id="3.40.50.2020">
    <property type="match status" value="1"/>
</dbReference>
<dbReference type="HAMAP" id="MF_01208">
    <property type="entry name" value="PyrE"/>
    <property type="match status" value="1"/>
</dbReference>
<dbReference type="InterPro" id="IPR023031">
    <property type="entry name" value="OPRT"/>
</dbReference>
<dbReference type="InterPro" id="IPR006273">
    <property type="entry name" value="Orotate_PRibTrfase_bac"/>
</dbReference>
<dbReference type="InterPro" id="IPR000836">
    <property type="entry name" value="PRibTrfase_dom"/>
</dbReference>
<dbReference type="InterPro" id="IPR029057">
    <property type="entry name" value="PRTase-like"/>
</dbReference>
<dbReference type="NCBIfam" id="TIGR01367">
    <property type="entry name" value="pyrE_Therm"/>
    <property type="match status" value="1"/>
</dbReference>
<dbReference type="PANTHER" id="PTHR19278">
    <property type="entry name" value="OROTATE PHOSPHORIBOSYLTRANSFERASE"/>
    <property type="match status" value="1"/>
</dbReference>
<dbReference type="PANTHER" id="PTHR19278:SF9">
    <property type="entry name" value="URIDINE 5'-MONOPHOSPHATE SYNTHASE"/>
    <property type="match status" value="1"/>
</dbReference>
<dbReference type="Pfam" id="PF00156">
    <property type="entry name" value="Pribosyltran"/>
    <property type="match status" value="1"/>
</dbReference>
<dbReference type="SUPFAM" id="SSF53271">
    <property type="entry name" value="PRTase-like"/>
    <property type="match status" value="1"/>
</dbReference>
<dbReference type="PROSITE" id="PS00103">
    <property type="entry name" value="PUR_PYR_PR_TRANSFER"/>
    <property type="match status" value="1"/>
</dbReference>
<gene>
    <name evidence="1" type="primary">pyrE</name>
    <name type="ordered locus">Athe_1382</name>
</gene>
<protein>
    <recommendedName>
        <fullName evidence="1">Orotate phosphoribosyltransferase</fullName>
        <shortName evidence="1">OPRT</shortName>
        <shortName evidence="1">OPRTase</shortName>
        <ecNumber evidence="1">2.4.2.10</ecNumber>
    </recommendedName>
</protein>
<name>PYRE_CALBD</name>